<sequence length="519" mass="58247">MGLMIFAYIAIGAVLGAGTGYLLHRYVSAKRIGDANELAKRIVEEARKEAQAQKKEILLQGQDEIFNQKRELENEFKERERELKARDRKLEEQGERLEEKLEKATQKEHEVLAIEKELTRKERRLATLEEELEGKIAEQDHRLEEVSGLTAEEARARIMEEVEARTRHESAKMIRVIEMEARETADRKAKEILASAIQRYAGDYVGEQTVTAVTLPSEDMKGRIIGREGRNIRALEAATGVDLIIDDTPETVILSAYSPLRRQVAKMALERLIQDGRIHPARIEDIVRKCEQELEVQVREVGEQATFDAGVHGIHPDIIKLLGQLRYRTSFSQNVLQHSLEVSALCGMMAAELGMDIKKAKRAGLLHDIGKAVDHEVEGPHALIGADIAKKYGEGKDIIHAIAAHHEDQPPKTALAVLVQAADSISGARPGARKELLENYVKRLEDLENIATGFEGVSKVYAIQAGREIRVMVNSENVDDDQTYMLCKDIAAKIEKNLTYPGQIRVTVIRERRAVGYAK</sequence>
<name>RNY_NITV4</name>
<accession>A1VAZ2</accession>
<feature type="chain" id="PRO_0000344869" description="Ribonuclease Y">
    <location>
        <begin position="1"/>
        <end position="519"/>
    </location>
</feature>
<feature type="transmembrane region" description="Helical" evidence="1">
    <location>
        <begin position="3"/>
        <end position="23"/>
    </location>
</feature>
<feature type="domain" description="KH" evidence="1">
    <location>
        <begin position="209"/>
        <end position="272"/>
    </location>
</feature>
<feature type="domain" description="HD" evidence="2">
    <location>
        <begin position="335"/>
        <end position="428"/>
    </location>
</feature>
<keyword id="KW-1003">Cell membrane</keyword>
<keyword id="KW-0255">Endonuclease</keyword>
<keyword id="KW-0378">Hydrolase</keyword>
<keyword id="KW-0472">Membrane</keyword>
<keyword id="KW-0540">Nuclease</keyword>
<keyword id="KW-0694">RNA-binding</keyword>
<keyword id="KW-0812">Transmembrane</keyword>
<keyword id="KW-1133">Transmembrane helix</keyword>
<gene>
    <name evidence="1" type="primary">rny</name>
    <name type="ordered locus">Dvul_0585</name>
</gene>
<organism>
    <name type="scientific">Nitratidesulfovibrio vulgaris (strain DP4)</name>
    <name type="common">Desulfovibrio vulgaris</name>
    <dbReference type="NCBI Taxonomy" id="391774"/>
    <lineage>
        <taxon>Bacteria</taxon>
        <taxon>Pseudomonadati</taxon>
        <taxon>Thermodesulfobacteriota</taxon>
        <taxon>Desulfovibrionia</taxon>
        <taxon>Desulfovibrionales</taxon>
        <taxon>Desulfovibrionaceae</taxon>
        <taxon>Nitratidesulfovibrio</taxon>
    </lineage>
</organism>
<evidence type="ECO:0000255" key="1">
    <source>
        <dbReference type="HAMAP-Rule" id="MF_00335"/>
    </source>
</evidence>
<evidence type="ECO:0000255" key="2">
    <source>
        <dbReference type="PROSITE-ProRule" id="PRU01175"/>
    </source>
</evidence>
<protein>
    <recommendedName>
        <fullName evidence="1">Ribonuclease Y</fullName>
        <shortName evidence="1">RNase Y</shortName>
        <ecNumber evidence="1">3.1.-.-</ecNumber>
    </recommendedName>
</protein>
<reference key="1">
    <citation type="journal article" date="2009" name="Environ. Microbiol.">
        <title>Contribution of mobile genetic elements to Desulfovibrio vulgaris genome plasticity.</title>
        <authorList>
            <person name="Walker C.B."/>
            <person name="Stolyar S."/>
            <person name="Chivian D."/>
            <person name="Pinel N."/>
            <person name="Gabster J.A."/>
            <person name="Dehal P.S."/>
            <person name="He Z."/>
            <person name="Yang Z.K."/>
            <person name="Yen H.C."/>
            <person name="Zhou J."/>
            <person name="Wall J.D."/>
            <person name="Hazen T.C."/>
            <person name="Arkin A.P."/>
            <person name="Stahl D.A."/>
        </authorList>
    </citation>
    <scope>NUCLEOTIDE SEQUENCE [LARGE SCALE GENOMIC DNA]</scope>
    <source>
        <strain>DP4</strain>
    </source>
</reference>
<comment type="function">
    <text evidence="1">Endoribonuclease that initiates mRNA decay.</text>
</comment>
<comment type="subcellular location">
    <subcellularLocation>
        <location evidence="1">Cell membrane</location>
        <topology evidence="1">Single-pass membrane protein</topology>
    </subcellularLocation>
</comment>
<comment type="similarity">
    <text evidence="1">Belongs to the RNase Y family.</text>
</comment>
<dbReference type="EC" id="3.1.-.-" evidence="1"/>
<dbReference type="EMBL" id="CP000527">
    <property type="protein sequence ID" value="ABM27608.1"/>
    <property type="molecule type" value="Genomic_DNA"/>
</dbReference>
<dbReference type="RefSeq" id="WP_010939940.1">
    <property type="nucleotide sequence ID" value="NC_008751.1"/>
</dbReference>
<dbReference type="SMR" id="A1VAZ2"/>
<dbReference type="KEGG" id="dvl:Dvul_0585"/>
<dbReference type="HOGENOM" id="CLU_028328_1_0_7"/>
<dbReference type="Proteomes" id="UP000009173">
    <property type="component" value="Chromosome"/>
</dbReference>
<dbReference type="GO" id="GO:0005886">
    <property type="term" value="C:plasma membrane"/>
    <property type="evidence" value="ECO:0007669"/>
    <property type="project" value="UniProtKB-SubCell"/>
</dbReference>
<dbReference type="GO" id="GO:0003723">
    <property type="term" value="F:RNA binding"/>
    <property type="evidence" value="ECO:0007669"/>
    <property type="project" value="UniProtKB-UniRule"/>
</dbReference>
<dbReference type="GO" id="GO:0004521">
    <property type="term" value="F:RNA endonuclease activity"/>
    <property type="evidence" value="ECO:0007669"/>
    <property type="project" value="UniProtKB-UniRule"/>
</dbReference>
<dbReference type="GO" id="GO:0006402">
    <property type="term" value="P:mRNA catabolic process"/>
    <property type="evidence" value="ECO:0007669"/>
    <property type="project" value="UniProtKB-UniRule"/>
</dbReference>
<dbReference type="CDD" id="cd00077">
    <property type="entry name" value="HDc"/>
    <property type="match status" value="1"/>
</dbReference>
<dbReference type="CDD" id="cd22431">
    <property type="entry name" value="KH-I_RNaseY"/>
    <property type="match status" value="1"/>
</dbReference>
<dbReference type="FunFam" id="1.10.3210.10:FF:000022">
    <property type="entry name" value="Ribonuclease Y"/>
    <property type="match status" value="1"/>
</dbReference>
<dbReference type="Gene3D" id="3.30.310.210">
    <property type="match status" value="1"/>
</dbReference>
<dbReference type="Gene3D" id="1.10.3210.10">
    <property type="entry name" value="Hypothetical protein af1432"/>
    <property type="match status" value="1"/>
</dbReference>
<dbReference type="HAMAP" id="MF_00335">
    <property type="entry name" value="RNase_Y"/>
    <property type="match status" value="1"/>
</dbReference>
<dbReference type="InterPro" id="IPR028987">
    <property type="entry name" value="ATP_synth_B-like_membr_sf"/>
</dbReference>
<dbReference type="InterPro" id="IPR003607">
    <property type="entry name" value="HD/PDEase_dom"/>
</dbReference>
<dbReference type="InterPro" id="IPR006674">
    <property type="entry name" value="HD_domain"/>
</dbReference>
<dbReference type="InterPro" id="IPR006675">
    <property type="entry name" value="HDIG_dom"/>
</dbReference>
<dbReference type="InterPro" id="IPR004087">
    <property type="entry name" value="KH_dom"/>
</dbReference>
<dbReference type="InterPro" id="IPR004088">
    <property type="entry name" value="KH_dom_type_1"/>
</dbReference>
<dbReference type="InterPro" id="IPR036612">
    <property type="entry name" value="KH_dom_type_1_sf"/>
</dbReference>
<dbReference type="InterPro" id="IPR017705">
    <property type="entry name" value="Ribonuclease_Y"/>
</dbReference>
<dbReference type="InterPro" id="IPR022711">
    <property type="entry name" value="RNase_Y_N"/>
</dbReference>
<dbReference type="NCBIfam" id="TIGR00277">
    <property type="entry name" value="HDIG"/>
    <property type="match status" value="1"/>
</dbReference>
<dbReference type="NCBIfam" id="TIGR03319">
    <property type="entry name" value="RNase_Y"/>
    <property type="match status" value="1"/>
</dbReference>
<dbReference type="PANTHER" id="PTHR12826">
    <property type="entry name" value="RIBONUCLEASE Y"/>
    <property type="match status" value="1"/>
</dbReference>
<dbReference type="PANTHER" id="PTHR12826:SF15">
    <property type="entry name" value="RIBONUCLEASE Y"/>
    <property type="match status" value="1"/>
</dbReference>
<dbReference type="Pfam" id="PF01966">
    <property type="entry name" value="HD"/>
    <property type="match status" value="1"/>
</dbReference>
<dbReference type="Pfam" id="PF00013">
    <property type="entry name" value="KH_1"/>
    <property type="match status" value="1"/>
</dbReference>
<dbReference type="Pfam" id="PF12072">
    <property type="entry name" value="RNase_Y_N"/>
    <property type="match status" value="1"/>
</dbReference>
<dbReference type="SMART" id="SM00471">
    <property type="entry name" value="HDc"/>
    <property type="match status" value="1"/>
</dbReference>
<dbReference type="SMART" id="SM00322">
    <property type="entry name" value="KH"/>
    <property type="match status" value="1"/>
</dbReference>
<dbReference type="SUPFAM" id="SSF54791">
    <property type="entry name" value="Eukaryotic type KH-domain (KH-domain type I)"/>
    <property type="match status" value="1"/>
</dbReference>
<dbReference type="SUPFAM" id="SSF81573">
    <property type="entry name" value="F1F0 ATP synthase subunit B, membrane domain"/>
    <property type="match status" value="1"/>
</dbReference>
<dbReference type="SUPFAM" id="SSF109604">
    <property type="entry name" value="HD-domain/PDEase-like"/>
    <property type="match status" value="1"/>
</dbReference>
<dbReference type="PROSITE" id="PS51831">
    <property type="entry name" value="HD"/>
    <property type="match status" value="1"/>
</dbReference>
<dbReference type="PROSITE" id="PS50084">
    <property type="entry name" value="KH_TYPE_1"/>
    <property type="match status" value="1"/>
</dbReference>
<proteinExistence type="inferred from homology"/>